<keyword id="KW-0106">Calcium</keyword>
<keyword id="KW-0134">Cell wall</keyword>
<keyword id="KW-0572">Peptidoglycan-anchor</keyword>
<keyword id="KW-0677">Repeat</keyword>
<keyword id="KW-0964">Secreted</keyword>
<keyword id="KW-0732">Signal</keyword>
<feature type="signal peptide" evidence="2">
    <location>
        <begin position="1"/>
        <end position="50"/>
    </location>
</feature>
<feature type="chain" id="PRO_0000281394" description="Serine-aspartate repeat-containing protein C">
    <location>
        <begin position="51"/>
        <end position="919"/>
    </location>
</feature>
<feature type="propeptide" id="PRO_0000281395" description="Removed by sortase" evidence="3">
    <location>
        <begin position="920"/>
        <end position="953"/>
    </location>
</feature>
<feature type="domain" description="CNA-B 1">
    <location>
        <begin position="496"/>
        <end position="606"/>
    </location>
</feature>
<feature type="domain" description="CNA-B 2">
    <location>
        <begin position="607"/>
        <end position="717"/>
    </location>
</feature>
<feature type="region of interest" description="Ligand binding A region">
    <location>
        <begin position="51"/>
        <end position="495"/>
    </location>
</feature>
<feature type="region of interest" description="Disordered" evidence="4">
    <location>
        <begin position="51"/>
        <end position="160"/>
    </location>
</feature>
<feature type="region of interest" description="Disordered" evidence="4">
    <location>
        <begin position="678"/>
        <end position="933"/>
    </location>
</feature>
<feature type="short sequence motif" description="LPXTG sorting signal" evidence="3">
    <location>
        <begin position="916"/>
        <end position="920"/>
    </location>
</feature>
<feature type="compositionally biased region" description="Polar residues" evidence="4">
    <location>
        <begin position="56"/>
        <end position="71"/>
    </location>
</feature>
<feature type="compositionally biased region" description="Basic and acidic residues" evidence="4">
    <location>
        <begin position="72"/>
        <end position="83"/>
    </location>
</feature>
<feature type="compositionally biased region" description="Polar residues" evidence="4">
    <location>
        <begin position="84"/>
        <end position="114"/>
    </location>
</feature>
<feature type="compositionally biased region" description="Low complexity" evidence="4">
    <location>
        <begin position="115"/>
        <end position="132"/>
    </location>
</feature>
<feature type="compositionally biased region" description="Polar residues" evidence="4">
    <location>
        <begin position="133"/>
        <end position="160"/>
    </location>
</feature>
<feature type="compositionally biased region" description="Acidic residues" evidence="4">
    <location>
        <begin position="685"/>
        <end position="695"/>
    </location>
</feature>
<feature type="compositionally biased region" description="Acidic residues" evidence="4">
    <location>
        <begin position="712"/>
        <end position="892"/>
    </location>
</feature>
<feature type="compositionally biased region" description="Low complexity" evidence="4">
    <location>
        <begin position="918"/>
        <end position="933"/>
    </location>
</feature>
<feature type="modified residue" description="Pentaglycyl murein peptidoglycan amidated threonine" evidence="3">
    <location>
        <position position="919"/>
    </location>
</feature>
<evidence type="ECO:0000250" key="1">
    <source>
        <dbReference type="UniProtKB" id="O86487"/>
    </source>
</evidence>
<evidence type="ECO:0000255" key="2"/>
<evidence type="ECO:0000255" key="3">
    <source>
        <dbReference type="PROSITE-ProRule" id="PRU00477"/>
    </source>
</evidence>
<evidence type="ECO:0000256" key="4">
    <source>
        <dbReference type="SAM" id="MobiDB-lite"/>
    </source>
</evidence>
<evidence type="ECO:0000305" key="5"/>
<sequence length="953" mass="103293">MNNKKTATNRKGMIPNRLNKFSIRKYSVGTASILVGTTLIFGLSGHEAKAAEHTNGELNQSKNETTAPSENKTTEKVDSRQLKDNTQTATADQPKVTMSDSATVKETSSNMQSPQNATASQSTTQTSNVTTNDKSSTTYSNETDKSNLTQAKNVSTTPKTTTIKQRALNRMAVNTVAAPQQGTNVNDKVHFTNIDIAIDKGHVNKTTGNTEFWATSSDVLKLKANYTIDDSVKEGDTFTFKYGQYFRPGSVRLPSQTQNLYNAQGNIIAKGIYDSKTNTTTYTFTNYVDQYTNVSGSFEQVAFAKRENATTDKTAYKMEVTLGNDTYSKDVIVDYGNQKGQQLISSTNYINNEDLSRNMTVYVNQPKKTYTKETFVTNLTGYKFNPDAKNFKIYEVTDQNQFVDSFTPDTSKLKDVTGQFDVIYSNDNKTATVDLLNGQSSSDKQYIIQQVAYPDNSSTDNGKIDYTLETQNGKSSWSNSYSNVNGSSTANGDQKKYNLGDYVWEDTNKDGKQDANEKGIKGVYVILKDSNGKELDRTTTDENGKYQFTGLSNGTYSVEFSTPAGYTPTTANAGTDDAVDSDGLTTTGVIKDADNMTLDSGFYKTPKYSLGDYVWYDSNKDGKQDSTEKGIKGVKVTLQNEKGEVIGTTETDENGKYRFDNLDSGKYKVIFEKPAGLTQTGTNTTEDDKDADGGEVDVTITDHDDFTLDNGYYEEETSDSDSDSDSDSDSDSDSDSDSDSDSDSDSDSDSDSDSDSDSDSDSDSDSDSDSDSESDSDSDSDSDSDSDSDSDSDSDSDSDSDSDSDSDSDSDSDSDSDSDSDSDNDSDSDSDSDSDSDSDSDSDSDSDSDSDSDSDSDSDSDSDSDSDSDSDSDSDSDSDSDSDSDSDSDSDSDAGKHTPTKPMSTVKDQHKTAKALPETGSENNNSNNGTLFGGLFAALGSLLLFGRRKKQNK</sequence>
<protein>
    <recommendedName>
        <fullName>Serine-aspartate repeat-containing protein C</fullName>
    </recommendedName>
</protein>
<accession>Q7A781</accession>
<proteinExistence type="evidence at protein level"/>
<name>SDRC_STAAN</name>
<dbReference type="EMBL" id="BA000018">
    <property type="protein sequence ID" value="BAB41750.1"/>
    <property type="molecule type" value="Genomic_DNA"/>
</dbReference>
<dbReference type="PIR" id="C89824">
    <property type="entry name" value="C89824"/>
</dbReference>
<dbReference type="RefSeq" id="WP_001060462.1">
    <property type="nucleotide sequence ID" value="NC_002745.2"/>
</dbReference>
<dbReference type="SMR" id="Q7A781"/>
<dbReference type="EnsemblBacteria" id="BAB41750">
    <property type="protein sequence ID" value="BAB41750"/>
    <property type="gene ID" value="BAB41750"/>
</dbReference>
<dbReference type="KEGG" id="sau:SA0519"/>
<dbReference type="HOGENOM" id="CLU_004137_1_2_9"/>
<dbReference type="PRO" id="PR:Q7A781"/>
<dbReference type="GO" id="GO:0005576">
    <property type="term" value="C:extracellular region"/>
    <property type="evidence" value="ECO:0007669"/>
    <property type="project" value="UniProtKB-KW"/>
</dbReference>
<dbReference type="GO" id="GO:0007155">
    <property type="term" value="P:cell adhesion"/>
    <property type="evidence" value="ECO:0007669"/>
    <property type="project" value="InterPro"/>
</dbReference>
<dbReference type="Gene3D" id="2.60.40.1280">
    <property type="match status" value="1"/>
</dbReference>
<dbReference type="Gene3D" id="2.60.40.1290">
    <property type="match status" value="1"/>
</dbReference>
<dbReference type="Gene3D" id="2.60.40.10">
    <property type="entry name" value="Immunoglobulins"/>
    <property type="match status" value="2"/>
</dbReference>
<dbReference type="InterPro" id="IPR011266">
    <property type="entry name" value="Adhesin_Fg-bd_dom_2"/>
</dbReference>
<dbReference type="InterPro" id="IPR008966">
    <property type="entry name" value="Adhesion_dom_sf"/>
</dbReference>
<dbReference type="InterPro" id="IPR011252">
    <property type="entry name" value="Fibrogen-bd_dom1"/>
</dbReference>
<dbReference type="InterPro" id="IPR013783">
    <property type="entry name" value="Ig-like_fold"/>
</dbReference>
<dbReference type="InterPro" id="IPR019931">
    <property type="entry name" value="LPXTG_anchor"/>
</dbReference>
<dbReference type="InterPro" id="IPR050972">
    <property type="entry name" value="SDr-like"/>
</dbReference>
<dbReference type="InterPro" id="IPR033764">
    <property type="entry name" value="Sdr_B"/>
</dbReference>
<dbReference type="InterPro" id="IPR041171">
    <property type="entry name" value="SDR_Ig"/>
</dbReference>
<dbReference type="InterPro" id="IPR005877">
    <property type="entry name" value="YSIRK_signal_dom"/>
</dbReference>
<dbReference type="NCBIfam" id="TIGR01167">
    <property type="entry name" value="LPXTG_anchor"/>
    <property type="match status" value="1"/>
</dbReference>
<dbReference type="NCBIfam" id="NF000535">
    <property type="entry name" value="MSCRAMM_SdrC"/>
    <property type="match status" value="1"/>
</dbReference>
<dbReference type="NCBIfam" id="TIGR01168">
    <property type="entry name" value="YSIRK_signal"/>
    <property type="match status" value="1"/>
</dbReference>
<dbReference type="PANTHER" id="PTHR34403">
    <property type="entry name" value="TOL-PAL SYSTEM PROTEIN TOLA"/>
    <property type="match status" value="1"/>
</dbReference>
<dbReference type="PANTHER" id="PTHR34403:SF8">
    <property type="entry name" value="TOL-PAL SYSTEM PROTEIN TOLA"/>
    <property type="match status" value="1"/>
</dbReference>
<dbReference type="Pfam" id="PF17961">
    <property type="entry name" value="Big_8"/>
    <property type="match status" value="1"/>
</dbReference>
<dbReference type="Pfam" id="PF00746">
    <property type="entry name" value="Gram_pos_anchor"/>
    <property type="match status" value="1"/>
</dbReference>
<dbReference type="Pfam" id="PF17210">
    <property type="entry name" value="SdrD_B"/>
    <property type="match status" value="2"/>
</dbReference>
<dbReference type="Pfam" id="PF10425">
    <property type="entry name" value="SdrG_C_C"/>
    <property type="match status" value="1"/>
</dbReference>
<dbReference type="Pfam" id="PF04650">
    <property type="entry name" value="YSIRK_signal"/>
    <property type="match status" value="1"/>
</dbReference>
<dbReference type="SUPFAM" id="SSF49401">
    <property type="entry name" value="Bacterial adhesins"/>
    <property type="match status" value="2"/>
</dbReference>
<dbReference type="SUPFAM" id="SSF117074">
    <property type="entry name" value="Hypothetical protein PA1324"/>
    <property type="match status" value="2"/>
</dbReference>
<dbReference type="PROSITE" id="PS50847">
    <property type="entry name" value="GRAM_POS_ANCHORING"/>
    <property type="match status" value="1"/>
</dbReference>
<organism>
    <name type="scientific">Staphylococcus aureus (strain N315)</name>
    <dbReference type="NCBI Taxonomy" id="158879"/>
    <lineage>
        <taxon>Bacteria</taxon>
        <taxon>Bacillati</taxon>
        <taxon>Bacillota</taxon>
        <taxon>Bacilli</taxon>
        <taxon>Bacillales</taxon>
        <taxon>Staphylococcaceae</taxon>
        <taxon>Staphylococcus</taxon>
    </lineage>
</organism>
<reference key="1">
    <citation type="journal article" date="2001" name="Lancet">
        <title>Whole genome sequencing of meticillin-resistant Staphylococcus aureus.</title>
        <authorList>
            <person name="Kuroda M."/>
            <person name="Ohta T."/>
            <person name="Uchiyama I."/>
            <person name="Baba T."/>
            <person name="Yuzawa H."/>
            <person name="Kobayashi I."/>
            <person name="Cui L."/>
            <person name="Oguchi A."/>
            <person name="Aoki K."/>
            <person name="Nagai Y."/>
            <person name="Lian J.-Q."/>
            <person name="Ito T."/>
            <person name="Kanamori M."/>
            <person name="Matsumaru H."/>
            <person name="Maruyama A."/>
            <person name="Murakami H."/>
            <person name="Hosoyama A."/>
            <person name="Mizutani-Ui Y."/>
            <person name="Takahashi N.K."/>
            <person name="Sawano T."/>
            <person name="Inoue R."/>
            <person name="Kaito C."/>
            <person name="Sekimizu K."/>
            <person name="Hirakawa H."/>
            <person name="Kuhara S."/>
            <person name="Goto S."/>
            <person name="Yabuzaki J."/>
            <person name="Kanehisa M."/>
            <person name="Yamashita A."/>
            <person name="Oshima K."/>
            <person name="Furuya K."/>
            <person name="Yoshino C."/>
            <person name="Shiba T."/>
            <person name="Hattori M."/>
            <person name="Ogasawara N."/>
            <person name="Hayashi H."/>
            <person name="Hiramatsu K."/>
        </authorList>
    </citation>
    <scope>NUCLEOTIDE SEQUENCE [LARGE SCALE GENOMIC DNA]</scope>
    <source>
        <strain>N315</strain>
    </source>
</reference>
<reference key="2">
    <citation type="submission" date="2007-10" db="UniProtKB">
        <title>Shotgun proteomic analysis of total and membrane protein extracts of S. aureus strain N315.</title>
        <authorList>
            <person name="Vaezzadeh A.R."/>
            <person name="Deshusses J."/>
            <person name="Lescuyer P."/>
            <person name="Hochstrasser D.F."/>
        </authorList>
    </citation>
    <scope>IDENTIFICATION BY MASS SPECTROMETRY [LARGE SCALE ANALYSIS]</scope>
    <source>
        <strain>N315</strain>
    </source>
</reference>
<comment type="function">
    <text evidence="1">Cell surface-associated calcium-binding protein which plays an important role in adhesion and pathogenesis. Mediates interactions with components of the extracellular matrix such as host NRXN1 to promote bacterial adhesion.</text>
</comment>
<comment type="subunit">
    <text evidence="1">Homodimerizes; via N2-Domain. Interacts with host NRXN1; this interaction mediates bacterial attachment to host cells.</text>
</comment>
<comment type="subcellular location">
    <subcellularLocation>
        <location evidence="3">Secreted</location>
        <location evidence="3">Cell wall</location>
        <topology evidence="3">Peptidoglycan-anchor</topology>
    </subcellularLocation>
</comment>
<comment type="similarity">
    <text evidence="5">Belongs to the serine-aspartate repeat-containing protein (SDr) family.</text>
</comment>
<gene>
    <name type="primary">sdrC</name>
    <name type="ordered locus">SA0519</name>
</gene>